<reference key="1">
    <citation type="journal article" date="1999" name="Nature">
        <title>Genomic sequence comparison of two unrelated isolates of the human gastric pathogen Helicobacter pylori.</title>
        <authorList>
            <person name="Alm R.A."/>
            <person name="Ling L.-S.L."/>
            <person name="Moir D.T."/>
            <person name="King B.L."/>
            <person name="Brown E.D."/>
            <person name="Doig P.C."/>
            <person name="Smith D.R."/>
            <person name="Noonan B."/>
            <person name="Guild B.C."/>
            <person name="deJonge B.L."/>
            <person name="Carmel G."/>
            <person name="Tummino P.J."/>
            <person name="Caruso A."/>
            <person name="Uria-Nickelsen M."/>
            <person name="Mills D.M."/>
            <person name="Ives C."/>
            <person name="Gibson R."/>
            <person name="Merberg D."/>
            <person name="Mills S.D."/>
            <person name="Jiang Q."/>
            <person name="Taylor D.E."/>
            <person name="Vovis G.F."/>
            <person name="Trust T.J."/>
        </authorList>
    </citation>
    <scope>NUCLEOTIDE SEQUENCE [LARGE SCALE GENOMIC DNA]</scope>
    <source>
        <strain>J99 / ATCC 700824</strain>
    </source>
</reference>
<keyword id="KW-0342">GTP-binding</keyword>
<keyword id="KW-0378">Hydrolase</keyword>
<keyword id="KW-0479">Metal-binding</keyword>
<keyword id="KW-0533">Nickel</keyword>
<keyword id="KW-0547">Nucleotide-binding</keyword>
<keyword id="KW-0862">Zinc</keyword>
<gene>
    <name type="primary">hypB</name>
    <name type="ordered locus">jhp_0837</name>
</gene>
<feature type="chain" id="PRO_0000201443" description="Hydrogenase/urease maturation factor HypB">
    <location>
        <begin position="1"/>
        <end position="242"/>
    </location>
</feature>
<feature type="region of interest" description="G-domain" evidence="2">
    <location>
        <begin position="48"/>
        <end position="211"/>
    </location>
</feature>
<feature type="binding site" evidence="1">
    <location>
        <position position="106"/>
    </location>
    <ligand>
        <name>Ni(2+)</name>
        <dbReference type="ChEBI" id="CHEBI:49786"/>
    </ligand>
</feature>
<feature type="binding site" evidence="1">
    <location>
        <position position="106"/>
    </location>
    <ligand>
        <name>Zn(2+)</name>
        <dbReference type="ChEBI" id="CHEBI:29105"/>
    </ligand>
</feature>
<feature type="binding site" evidence="1">
    <location>
        <position position="107"/>
    </location>
    <ligand>
        <name>Ni(2+)</name>
        <dbReference type="ChEBI" id="CHEBI:49786"/>
    </ligand>
</feature>
<feature type="binding site" evidence="1">
    <location>
        <position position="142"/>
    </location>
    <ligand>
        <name>Ni(2+)</name>
        <dbReference type="ChEBI" id="CHEBI:49786"/>
    </ligand>
</feature>
<feature type="binding site" evidence="1">
    <location>
        <position position="142"/>
    </location>
    <ligand>
        <name>Zn(2+)</name>
        <dbReference type="ChEBI" id="CHEBI:29105"/>
    </ligand>
</feature>
<comment type="function">
    <text evidence="2">Involved in the maturation of [NiFe] hydrogenases. Required for nickel insertion into the metal center of the hydrogenase. Exhibits a low intrinsic GTPase activity, which is essential for nickel insertion.</text>
</comment>
<comment type="similarity">
    <text evidence="3">Belongs to the SIMIBI class G3E GTPase family. HypB/HupM subfamily.</text>
</comment>
<sequence length="242" mass="27339">MSEQRKESLQNNPNLSKKDIKIVEKILSKNDIKAAEMKERYLKEGLYVLNFMSSPGSGKTTMLENLADFKDFKFCVVEGDLQTNRDADRLRKKGVSAHQITTGEACHLEASMIEGAFDLLKDEGALEKSDFLIIENVGNLVCPSSYNLGAAMNIVLLSVPEGDDKVLKYPTMFMCADAVIISKADMIEVFNFRVSQVKEDMQKLKPEAPIFLMSSKDPKSLEDFKNFLLEKKRENYQSTHSF</sequence>
<proteinExistence type="inferred from homology"/>
<dbReference type="EMBL" id="AE001439">
    <property type="protein sequence ID" value="AAD06415.1"/>
    <property type="molecule type" value="Genomic_DNA"/>
</dbReference>
<dbReference type="PIR" id="H71883">
    <property type="entry name" value="H71883"/>
</dbReference>
<dbReference type="RefSeq" id="WP_000003585.1">
    <property type="nucleotide sequence ID" value="NZ_CP011330.1"/>
</dbReference>
<dbReference type="SMR" id="Q9ZKU8"/>
<dbReference type="KEGG" id="hpj:jhp_0837"/>
<dbReference type="PATRIC" id="fig|85963.30.peg.130"/>
<dbReference type="eggNOG" id="COG0378">
    <property type="taxonomic scope" value="Bacteria"/>
</dbReference>
<dbReference type="Proteomes" id="UP000000804">
    <property type="component" value="Chromosome"/>
</dbReference>
<dbReference type="GO" id="GO:0005525">
    <property type="term" value="F:GTP binding"/>
    <property type="evidence" value="ECO:0007669"/>
    <property type="project" value="UniProtKB-KW"/>
</dbReference>
<dbReference type="GO" id="GO:0003924">
    <property type="term" value="F:GTPase activity"/>
    <property type="evidence" value="ECO:0007669"/>
    <property type="project" value="InterPro"/>
</dbReference>
<dbReference type="GO" id="GO:0016151">
    <property type="term" value="F:nickel cation binding"/>
    <property type="evidence" value="ECO:0007669"/>
    <property type="project" value="InterPro"/>
</dbReference>
<dbReference type="GO" id="GO:0008270">
    <property type="term" value="F:zinc ion binding"/>
    <property type="evidence" value="ECO:0007669"/>
    <property type="project" value="TreeGrafter"/>
</dbReference>
<dbReference type="GO" id="GO:0051604">
    <property type="term" value="P:protein maturation"/>
    <property type="evidence" value="ECO:0007669"/>
    <property type="project" value="InterPro"/>
</dbReference>
<dbReference type="CDD" id="cd05390">
    <property type="entry name" value="HypB"/>
    <property type="match status" value="1"/>
</dbReference>
<dbReference type="Gene3D" id="3.40.50.300">
    <property type="entry name" value="P-loop containing nucleotide triphosphate hydrolases"/>
    <property type="match status" value="1"/>
</dbReference>
<dbReference type="InterPro" id="IPR003495">
    <property type="entry name" value="CobW/HypB/UreG_nucleotide-bd"/>
</dbReference>
<dbReference type="InterPro" id="IPR004392">
    <property type="entry name" value="Hyd_mat_HypB"/>
</dbReference>
<dbReference type="InterPro" id="IPR027417">
    <property type="entry name" value="P-loop_NTPase"/>
</dbReference>
<dbReference type="NCBIfam" id="TIGR00073">
    <property type="entry name" value="hypB"/>
    <property type="match status" value="1"/>
</dbReference>
<dbReference type="PANTHER" id="PTHR30134:SF2">
    <property type="entry name" value="HYDROGENASE MATURATION FACTOR HYPB"/>
    <property type="match status" value="1"/>
</dbReference>
<dbReference type="PANTHER" id="PTHR30134">
    <property type="entry name" value="HYDROGENASE PROTEIN ASSEMBLY PROTEIN, NICKEL CHAPERONE"/>
    <property type="match status" value="1"/>
</dbReference>
<dbReference type="Pfam" id="PF02492">
    <property type="entry name" value="cobW"/>
    <property type="match status" value="1"/>
</dbReference>
<dbReference type="PIRSF" id="PIRSF005624">
    <property type="entry name" value="Ni-bind_GTPase"/>
    <property type="match status" value="1"/>
</dbReference>
<dbReference type="SUPFAM" id="SSF52540">
    <property type="entry name" value="P-loop containing nucleoside triphosphate hydrolases"/>
    <property type="match status" value="1"/>
</dbReference>
<name>HYPB_HELPJ</name>
<protein>
    <recommendedName>
        <fullName evidence="1">Hydrogenase/urease maturation factor HypB</fullName>
    </recommendedName>
</protein>
<evidence type="ECO:0000250" key="1">
    <source>
        <dbReference type="UniProtKB" id="O25560"/>
    </source>
</evidence>
<evidence type="ECO:0000250" key="2">
    <source>
        <dbReference type="UniProtKB" id="P0AAN3"/>
    </source>
</evidence>
<evidence type="ECO:0000305" key="3"/>
<accession>Q9ZKU8</accession>
<organism>
    <name type="scientific">Helicobacter pylori (strain J99 / ATCC 700824)</name>
    <name type="common">Campylobacter pylori J99</name>
    <dbReference type="NCBI Taxonomy" id="85963"/>
    <lineage>
        <taxon>Bacteria</taxon>
        <taxon>Pseudomonadati</taxon>
        <taxon>Campylobacterota</taxon>
        <taxon>Epsilonproteobacteria</taxon>
        <taxon>Campylobacterales</taxon>
        <taxon>Helicobacteraceae</taxon>
        <taxon>Helicobacter</taxon>
    </lineage>
</organism>